<sequence>MLDKIDRKLLALLQQDCTLSLQALAEAVNLTTTPCWKRLKRLEDDGILIGKVALLDPEKIGLGLTAFVLIKTQHHSSEWYCRFVTVVTEMPEVLGFWRMAGEYDYLMRVQVADMKRYDEFYKRLVNSVPGLSDVTSSFAMEQIKYTTSLPIE</sequence>
<proteinExistence type="inferred from homology"/>
<gene>
    <name type="primary">decR</name>
    <name type="ordered locus">Z0555</name>
    <name type="ordered locus">ECs0501</name>
</gene>
<reference key="1">
    <citation type="journal article" date="2001" name="Nature">
        <title>Genome sequence of enterohaemorrhagic Escherichia coli O157:H7.</title>
        <authorList>
            <person name="Perna N.T."/>
            <person name="Plunkett G. III"/>
            <person name="Burland V."/>
            <person name="Mau B."/>
            <person name="Glasner J.D."/>
            <person name="Rose D.J."/>
            <person name="Mayhew G.F."/>
            <person name="Evans P.S."/>
            <person name="Gregor J."/>
            <person name="Kirkpatrick H.A."/>
            <person name="Posfai G."/>
            <person name="Hackett J."/>
            <person name="Klink S."/>
            <person name="Boutin A."/>
            <person name="Shao Y."/>
            <person name="Miller L."/>
            <person name="Grotbeck E.J."/>
            <person name="Davis N.W."/>
            <person name="Lim A."/>
            <person name="Dimalanta E.T."/>
            <person name="Potamousis K."/>
            <person name="Apodaca J."/>
            <person name="Anantharaman T.S."/>
            <person name="Lin J."/>
            <person name="Yen G."/>
            <person name="Schwartz D.C."/>
            <person name="Welch R.A."/>
            <person name="Blattner F.R."/>
        </authorList>
    </citation>
    <scope>NUCLEOTIDE SEQUENCE [LARGE SCALE GENOMIC DNA]</scope>
    <source>
        <strain>O157:H7 / EDL933 / ATCC 700927 / EHEC</strain>
    </source>
</reference>
<reference key="2">
    <citation type="journal article" date="2001" name="DNA Res.">
        <title>Complete genome sequence of enterohemorrhagic Escherichia coli O157:H7 and genomic comparison with a laboratory strain K-12.</title>
        <authorList>
            <person name="Hayashi T."/>
            <person name="Makino K."/>
            <person name="Ohnishi M."/>
            <person name="Kurokawa K."/>
            <person name="Ishii K."/>
            <person name="Yokoyama K."/>
            <person name="Han C.-G."/>
            <person name="Ohtsubo E."/>
            <person name="Nakayama K."/>
            <person name="Murata T."/>
            <person name="Tanaka M."/>
            <person name="Tobe T."/>
            <person name="Iida T."/>
            <person name="Takami H."/>
            <person name="Honda T."/>
            <person name="Sasakawa C."/>
            <person name="Ogasawara N."/>
            <person name="Yasunaga T."/>
            <person name="Kuhara S."/>
            <person name="Shiba T."/>
            <person name="Hattori M."/>
            <person name="Shinagawa H."/>
        </authorList>
    </citation>
    <scope>NUCLEOTIDE SEQUENCE [LARGE SCALE GENOMIC DNA]</scope>
    <source>
        <strain>O157:H7 / Sakai / RIMD 0509952 / EHEC</strain>
    </source>
</reference>
<name>DECR_ECO57</name>
<organism>
    <name type="scientific">Escherichia coli O157:H7</name>
    <dbReference type="NCBI Taxonomy" id="83334"/>
    <lineage>
        <taxon>Bacteria</taxon>
        <taxon>Pseudomonadati</taxon>
        <taxon>Pseudomonadota</taxon>
        <taxon>Gammaproteobacteria</taxon>
        <taxon>Enterobacterales</taxon>
        <taxon>Enterobacteriaceae</taxon>
        <taxon>Escherichia</taxon>
    </lineage>
</organism>
<keyword id="KW-0010">Activator</keyword>
<keyword id="KW-0238">DNA-binding</keyword>
<keyword id="KW-1185">Reference proteome</keyword>
<keyword id="KW-0804">Transcription</keyword>
<keyword id="KW-0805">Transcription regulation</keyword>
<accession>P0ACJ7</accession>
<accession>P54986</accession>
<accession>P71209</accession>
<accession>P77575</accession>
<dbReference type="EMBL" id="AE005174">
    <property type="protein sequence ID" value="AAG54797.1"/>
    <property type="molecule type" value="Genomic_DNA"/>
</dbReference>
<dbReference type="EMBL" id="BA000007">
    <property type="protein sequence ID" value="BAB33924.2"/>
    <property type="molecule type" value="Genomic_DNA"/>
</dbReference>
<dbReference type="PIR" id="A85542">
    <property type="entry name" value="A85542"/>
</dbReference>
<dbReference type="RefSeq" id="WP_000884589.1">
    <property type="nucleotide sequence ID" value="NZ_VOAI01000005.1"/>
</dbReference>
<dbReference type="SMR" id="P0ACJ7"/>
<dbReference type="STRING" id="155864.Z0555"/>
<dbReference type="GeneID" id="86945361"/>
<dbReference type="KEGG" id="ece:Z0555"/>
<dbReference type="KEGG" id="ecs:ECs_0501"/>
<dbReference type="PATRIC" id="fig|386585.9.peg.605"/>
<dbReference type="eggNOG" id="COG1522">
    <property type="taxonomic scope" value="Bacteria"/>
</dbReference>
<dbReference type="HOGENOM" id="CLU_091233_0_2_6"/>
<dbReference type="OMA" id="STTPCWK"/>
<dbReference type="Proteomes" id="UP000000558">
    <property type="component" value="Chromosome"/>
</dbReference>
<dbReference type="Proteomes" id="UP000002519">
    <property type="component" value="Chromosome"/>
</dbReference>
<dbReference type="GO" id="GO:0005829">
    <property type="term" value="C:cytosol"/>
    <property type="evidence" value="ECO:0007669"/>
    <property type="project" value="TreeGrafter"/>
</dbReference>
<dbReference type="GO" id="GO:0043565">
    <property type="term" value="F:sequence-specific DNA binding"/>
    <property type="evidence" value="ECO:0007669"/>
    <property type="project" value="InterPro"/>
</dbReference>
<dbReference type="GO" id="GO:0006355">
    <property type="term" value="P:regulation of DNA-templated transcription"/>
    <property type="evidence" value="ECO:0007669"/>
    <property type="project" value="UniProtKB-ARBA"/>
</dbReference>
<dbReference type="GO" id="GO:0043200">
    <property type="term" value="P:response to amino acid"/>
    <property type="evidence" value="ECO:0007669"/>
    <property type="project" value="TreeGrafter"/>
</dbReference>
<dbReference type="CDD" id="cd00090">
    <property type="entry name" value="HTH_ARSR"/>
    <property type="match status" value="1"/>
</dbReference>
<dbReference type="FunFam" id="1.10.10.10:FF:000114">
    <property type="entry name" value="Lrp/AsnC family transcriptional regulator"/>
    <property type="match status" value="1"/>
</dbReference>
<dbReference type="FunFam" id="3.30.70.920:FF:000005">
    <property type="entry name" value="Lrp/AsnC family transcriptional regulator"/>
    <property type="match status" value="1"/>
</dbReference>
<dbReference type="Gene3D" id="3.30.70.920">
    <property type="match status" value="1"/>
</dbReference>
<dbReference type="Gene3D" id="1.10.10.10">
    <property type="entry name" value="Winged helix-like DNA-binding domain superfamily/Winged helix DNA-binding domain"/>
    <property type="match status" value="1"/>
</dbReference>
<dbReference type="InterPro" id="IPR011991">
    <property type="entry name" value="ArsR-like_HTH"/>
</dbReference>
<dbReference type="InterPro" id="IPR000485">
    <property type="entry name" value="AsnC-type_HTH_dom"/>
</dbReference>
<dbReference type="InterPro" id="IPR011008">
    <property type="entry name" value="Dimeric_a/b-barrel"/>
</dbReference>
<dbReference type="InterPro" id="IPR019888">
    <property type="entry name" value="Tscrpt_reg_AsnC-like"/>
</dbReference>
<dbReference type="InterPro" id="IPR019887">
    <property type="entry name" value="Tscrpt_reg_AsnC/Lrp_C"/>
</dbReference>
<dbReference type="InterPro" id="IPR019885">
    <property type="entry name" value="Tscrpt_reg_HTH_AsnC-type_CS"/>
</dbReference>
<dbReference type="InterPro" id="IPR036388">
    <property type="entry name" value="WH-like_DNA-bd_sf"/>
</dbReference>
<dbReference type="InterPro" id="IPR036390">
    <property type="entry name" value="WH_DNA-bd_sf"/>
</dbReference>
<dbReference type="PANTHER" id="PTHR30154:SF17">
    <property type="entry name" value="DNA-BINDING TRANSCRIPTIONAL ACTIVATOR DECR"/>
    <property type="match status" value="1"/>
</dbReference>
<dbReference type="PANTHER" id="PTHR30154">
    <property type="entry name" value="LEUCINE-RESPONSIVE REGULATORY PROTEIN"/>
    <property type="match status" value="1"/>
</dbReference>
<dbReference type="Pfam" id="PF01037">
    <property type="entry name" value="AsnC_trans_reg"/>
    <property type="match status" value="1"/>
</dbReference>
<dbReference type="Pfam" id="PF13412">
    <property type="entry name" value="HTH_24"/>
    <property type="match status" value="1"/>
</dbReference>
<dbReference type="PRINTS" id="PR00033">
    <property type="entry name" value="HTHASNC"/>
</dbReference>
<dbReference type="SMART" id="SM00344">
    <property type="entry name" value="HTH_ASNC"/>
    <property type="match status" value="1"/>
</dbReference>
<dbReference type="SUPFAM" id="SSF54909">
    <property type="entry name" value="Dimeric alpha+beta barrel"/>
    <property type="match status" value="1"/>
</dbReference>
<dbReference type="SUPFAM" id="SSF46785">
    <property type="entry name" value="Winged helix' DNA-binding domain"/>
    <property type="match status" value="1"/>
</dbReference>
<dbReference type="PROSITE" id="PS00519">
    <property type="entry name" value="HTH_ASNC_1"/>
    <property type="match status" value="1"/>
</dbReference>
<dbReference type="PROSITE" id="PS50956">
    <property type="entry name" value="HTH_ASNC_2"/>
    <property type="match status" value="1"/>
</dbReference>
<feature type="chain" id="PRO_0000111748" description="DNA-binding transcriptional activator DecR">
    <location>
        <begin position="1"/>
        <end position="152"/>
    </location>
</feature>
<feature type="domain" description="HTH asnC-type" evidence="2">
    <location>
        <begin position="2"/>
        <end position="63"/>
    </location>
</feature>
<feature type="DNA-binding region" description="H-T-H motif" evidence="2">
    <location>
        <begin position="21"/>
        <end position="40"/>
    </location>
</feature>
<evidence type="ECO:0000250" key="1">
    <source>
        <dbReference type="UniProtKB" id="P0ACJ5"/>
    </source>
</evidence>
<evidence type="ECO:0000255" key="2">
    <source>
        <dbReference type="PROSITE-ProRule" id="PRU00319"/>
    </source>
</evidence>
<comment type="function">
    <text evidence="1">Plays a role in L-cysteine detoxification. Binds to the dlsT(yhaO)-yhaM operon promoter in the presence but not absence of L-cysteine; activates transcription from the dlsT(yhaO)-yhaM operon.</text>
</comment>
<protein>
    <recommendedName>
        <fullName>DNA-binding transcriptional activator DecR</fullName>
    </recommendedName>
</protein>